<proteinExistence type="inferred from homology"/>
<sequence length="302" mass="35156">MDQQRFTHLLQLEAESIHIIREVAAEFSNPVMMYSIGKDSSVMLHLARKAFHPGKLPFPLLHVDTGWKFREMYAFRDHTAKAYGFELLVHKNPEGVAMGINPFVHGSAKHTDIMKNEGLKQALNQYGFDAAFGGARRDEEKSRAKERIYSFRDRFHRWDPKNQRPELWHNYNGQINKGESIRVFPLSNWTELDIWQYIFLENIEIVPLYLAKKRPVLERDGMLIMVDDDRIDLQPGEVIEQRMVRFRTLGCWPLTGAVASDAQTLPEIIEEMLVSTTSERQGRVIDRDQSGSMEMKKRQGYF</sequence>
<accession>Q2NVM9</accession>
<dbReference type="EC" id="2.7.7.4" evidence="1"/>
<dbReference type="EMBL" id="AP008232">
    <property type="protein sequence ID" value="BAE73796.1"/>
    <property type="molecule type" value="Genomic_DNA"/>
</dbReference>
<dbReference type="RefSeq" id="WP_011410494.1">
    <property type="nucleotide sequence ID" value="NC_007712.1"/>
</dbReference>
<dbReference type="SMR" id="Q2NVM9"/>
<dbReference type="STRING" id="343509.SG0521"/>
<dbReference type="KEGG" id="sgl:SG0521"/>
<dbReference type="eggNOG" id="COG0175">
    <property type="taxonomic scope" value="Bacteria"/>
</dbReference>
<dbReference type="HOGENOM" id="CLU_043026_0_0_6"/>
<dbReference type="OrthoDB" id="9772604at2"/>
<dbReference type="BioCyc" id="SGLO343509:SGP1_RS04625-MONOMER"/>
<dbReference type="UniPathway" id="UPA00140">
    <property type="reaction ID" value="UER00204"/>
</dbReference>
<dbReference type="Proteomes" id="UP000001932">
    <property type="component" value="Chromosome"/>
</dbReference>
<dbReference type="GO" id="GO:0005524">
    <property type="term" value="F:ATP binding"/>
    <property type="evidence" value="ECO:0007669"/>
    <property type="project" value="UniProtKB-KW"/>
</dbReference>
<dbReference type="GO" id="GO:0004781">
    <property type="term" value="F:sulfate adenylyltransferase (ATP) activity"/>
    <property type="evidence" value="ECO:0007669"/>
    <property type="project" value="UniProtKB-UniRule"/>
</dbReference>
<dbReference type="GO" id="GO:0070814">
    <property type="term" value="P:hydrogen sulfide biosynthetic process"/>
    <property type="evidence" value="ECO:0007669"/>
    <property type="project" value="UniProtKB-UniRule"/>
</dbReference>
<dbReference type="GO" id="GO:0000103">
    <property type="term" value="P:sulfate assimilation"/>
    <property type="evidence" value="ECO:0007669"/>
    <property type="project" value="UniProtKB-UniRule"/>
</dbReference>
<dbReference type="CDD" id="cd23946">
    <property type="entry name" value="Sulfate_adenylyltransferase_2"/>
    <property type="match status" value="1"/>
</dbReference>
<dbReference type="FunFam" id="3.40.50.620:FF:000002">
    <property type="entry name" value="Sulfate adenylyltransferase subunit 2"/>
    <property type="match status" value="1"/>
</dbReference>
<dbReference type="Gene3D" id="3.40.50.620">
    <property type="entry name" value="HUPs"/>
    <property type="match status" value="1"/>
</dbReference>
<dbReference type="HAMAP" id="MF_00064">
    <property type="entry name" value="Sulf_adenylyltr_sub2"/>
    <property type="match status" value="1"/>
</dbReference>
<dbReference type="InterPro" id="IPR002500">
    <property type="entry name" value="PAPS_reduct_dom"/>
</dbReference>
<dbReference type="InterPro" id="IPR014729">
    <property type="entry name" value="Rossmann-like_a/b/a_fold"/>
</dbReference>
<dbReference type="InterPro" id="IPR011784">
    <property type="entry name" value="SO4_adenylTrfase_ssu"/>
</dbReference>
<dbReference type="InterPro" id="IPR050128">
    <property type="entry name" value="Sulfate_adenylyltrnsfr_sub2"/>
</dbReference>
<dbReference type="NCBIfam" id="TIGR02039">
    <property type="entry name" value="CysD"/>
    <property type="match status" value="1"/>
</dbReference>
<dbReference type="NCBIfam" id="NF003587">
    <property type="entry name" value="PRK05253.1"/>
    <property type="match status" value="1"/>
</dbReference>
<dbReference type="NCBIfam" id="NF009214">
    <property type="entry name" value="PRK12563.1"/>
    <property type="match status" value="1"/>
</dbReference>
<dbReference type="PANTHER" id="PTHR43196">
    <property type="entry name" value="SULFATE ADENYLYLTRANSFERASE SUBUNIT 2"/>
    <property type="match status" value="1"/>
</dbReference>
<dbReference type="PANTHER" id="PTHR43196:SF1">
    <property type="entry name" value="SULFATE ADENYLYLTRANSFERASE SUBUNIT 2"/>
    <property type="match status" value="1"/>
</dbReference>
<dbReference type="Pfam" id="PF01507">
    <property type="entry name" value="PAPS_reduct"/>
    <property type="match status" value="1"/>
</dbReference>
<dbReference type="PIRSF" id="PIRSF002936">
    <property type="entry name" value="CysDAde_trans"/>
    <property type="match status" value="1"/>
</dbReference>
<dbReference type="SUPFAM" id="SSF52402">
    <property type="entry name" value="Adenine nucleotide alpha hydrolases-like"/>
    <property type="match status" value="1"/>
</dbReference>
<keyword id="KW-0067">ATP-binding</keyword>
<keyword id="KW-0547">Nucleotide-binding</keyword>
<keyword id="KW-0548">Nucleotidyltransferase</keyword>
<keyword id="KW-0808">Transferase</keyword>
<feature type="chain" id="PRO_1000008997" description="Sulfate adenylyltransferase subunit 2">
    <location>
        <begin position="1"/>
        <end position="302"/>
    </location>
</feature>
<protein>
    <recommendedName>
        <fullName evidence="1">Sulfate adenylyltransferase subunit 2</fullName>
        <ecNumber evidence="1">2.7.7.4</ecNumber>
    </recommendedName>
    <alternativeName>
        <fullName evidence="1">ATP-sulfurylase small subunit</fullName>
    </alternativeName>
    <alternativeName>
        <fullName evidence="1">Sulfate adenylate transferase</fullName>
        <shortName evidence="1">SAT</shortName>
    </alternativeName>
</protein>
<comment type="function">
    <text evidence="1">With CysN forms the ATP sulfurylase (ATPS) that catalyzes the adenylation of sulfate producing adenosine 5'-phosphosulfate (APS) and diphosphate, the first enzymatic step in sulfur assimilation pathway. APS synthesis involves the formation of a high-energy phosphoric-sulfuric acid anhydride bond driven by GTP hydrolysis by CysN coupled to ATP hydrolysis by CysD.</text>
</comment>
<comment type="catalytic activity">
    <reaction evidence="1">
        <text>sulfate + ATP + H(+) = adenosine 5'-phosphosulfate + diphosphate</text>
        <dbReference type="Rhea" id="RHEA:18133"/>
        <dbReference type="ChEBI" id="CHEBI:15378"/>
        <dbReference type="ChEBI" id="CHEBI:16189"/>
        <dbReference type="ChEBI" id="CHEBI:30616"/>
        <dbReference type="ChEBI" id="CHEBI:33019"/>
        <dbReference type="ChEBI" id="CHEBI:58243"/>
        <dbReference type="EC" id="2.7.7.4"/>
    </reaction>
</comment>
<comment type="pathway">
    <text evidence="1">Sulfur metabolism; hydrogen sulfide biosynthesis; sulfite from sulfate: step 1/3.</text>
</comment>
<comment type="subunit">
    <text evidence="1">Heterodimer composed of CysD, the smaller subunit, and CysN.</text>
</comment>
<comment type="similarity">
    <text evidence="1">Belongs to the PAPS reductase family. CysD subfamily.</text>
</comment>
<gene>
    <name evidence="1" type="primary">cysD</name>
    <name type="ordered locus">SG0521</name>
</gene>
<organism>
    <name type="scientific">Sodalis glossinidius (strain morsitans)</name>
    <dbReference type="NCBI Taxonomy" id="343509"/>
    <lineage>
        <taxon>Bacteria</taxon>
        <taxon>Pseudomonadati</taxon>
        <taxon>Pseudomonadota</taxon>
        <taxon>Gammaproteobacteria</taxon>
        <taxon>Enterobacterales</taxon>
        <taxon>Bruguierivoracaceae</taxon>
        <taxon>Sodalis</taxon>
    </lineage>
</organism>
<name>CYSD_SODGM</name>
<reference key="1">
    <citation type="journal article" date="2006" name="Genome Res.">
        <title>Massive genome erosion and functional adaptations provide insights into the symbiotic lifestyle of Sodalis glossinidius in the tsetse host.</title>
        <authorList>
            <person name="Toh H."/>
            <person name="Weiss B.L."/>
            <person name="Perkin S.A.H."/>
            <person name="Yamashita A."/>
            <person name="Oshima K."/>
            <person name="Hattori M."/>
            <person name="Aksoy S."/>
        </authorList>
    </citation>
    <scope>NUCLEOTIDE SEQUENCE [LARGE SCALE GENOMIC DNA]</scope>
    <source>
        <strain>morsitans</strain>
    </source>
</reference>
<evidence type="ECO:0000255" key="1">
    <source>
        <dbReference type="HAMAP-Rule" id="MF_00064"/>
    </source>
</evidence>